<comment type="function">
    <text evidence="1">The RuvA-RuvB-RuvC complex processes Holliday junction (HJ) DNA during genetic recombination and DNA repair, while the RuvA-RuvB complex plays an important role in the rescue of blocked DNA replication forks via replication fork reversal (RFR). RuvA specifically binds to HJ cruciform DNA, conferring on it an open structure. The RuvB hexamer acts as an ATP-dependent pump, pulling dsDNA into and through the RuvAB complex. HJ branch migration allows RuvC to scan DNA until it finds its consensus sequence, where it cleaves and resolves the cruciform DNA.</text>
</comment>
<comment type="subunit">
    <text evidence="1">Homotetramer. Forms an RuvA(8)-RuvB(12)-Holliday junction (HJ) complex. HJ DNA is sandwiched between 2 RuvA tetramers; dsDNA enters through RuvA and exits via RuvB. An RuvB hexamer assembles on each DNA strand where it exits the tetramer. Each RuvB hexamer is contacted by two RuvA subunits (via domain III) on 2 adjacent RuvB subunits; this complex drives branch migration. In the full resolvosome a probable DNA-RuvA(4)-RuvB(12)-RuvC(2) complex forms which resolves the HJ.</text>
</comment>
<comment type="subcellular location">
    <subcellularLocation>
        <location evidence="1">Cytoplasm</location>
    </subcellularLocation>
</comment>
<comment type="domain">
    <text evidence="1">Has three domains with a flexible linker between the domains II and III and assumes an 'L' shape. Domain III is highly mobile and contacts RuvB.</text>
</comment>
<comment type="similarity">
    <text evidence="1">Belongs to the RuvA family.</text>
</comment>
<proteinExistence type="inferred from homology"/>
<accession>C4Z030</accession>
<feature type="chain" id="PRO_1000201989" description="Holliday junction branch migration complex subunit RuvA">
    <location>
        <begin position="1"/>
        <end position="207"/>
    </location>
</feature>
<feature type="region of interest" description="Domain I" evidence="1">
    <location>
        <begin position="1"/>
        <end position="64"/>
    </location>
</feature>
<feature type="region of interest" description="Domain II" evidence="1">
    <location>
        <begin position="65"/>
        <end position="143"/>
    </location>
</feature>
<feature type="region of interest" description="Flexible linker" evidence="1">
    <location>
        <begin position="144"/>
        <end position="155"/>
    </location>
</feature>
<feature type="region of interest" description="Domain III" evidence="1">
    <location>
        <begin position="156"/>
        <end position="207"/>
    </location>
</feature>
<reference key="1">
    <citation type="journal article" date="2009" name="Proc. Natl. Acad. Sci. U.S.A.">
        <title>Characterizing a model human gut microbiota composed of members of its two dominant bacterial phyla.</title>
        <authorList>
            <person name="Mahowald M.A."/>
            <person name="Rey F.E."/>
            <person name="Seedorf H."/>
            <person name="Turnbaugh P.J."/>
            <person name="Fulton R.S."/>
            <person name="Wollam A."/>
            <person name="Shah N."/>
            <person name="Wang C."/>
            <person name="Magrini V."/>
            <person name="Wilson R.K."/>
            <person name="Cantarel B.L."/>
            <person name="Coutinho P.M."/>
            <person name="Henrissat B."/>
            <person name="Crock L.W."/>
            <person name="Russell A."/>
            <person name="Verberkmoes N.C."/>
            <person name="Hettich R.L."/>
            <person name="Gordon J.I."/>
        </authorList>
    </citation>
    <scope>NUCLEOTIDE SEQUENCE [LARGE SCALE GENOMIC DNA]</scope>
    <source>
        <strain>ATCC 27750 / DSM 3376 / VPI C15-48 / C15-B4</strain>
    </source>
</reference>
<sequence length="207" mass="22402">MISYIKGELAEILPDVIVVEANGIGYNIYVPGSVPGELPSVGSEVKIYTYMNVKEDECSLFGFLTRDDLSMFKMLICVNGIGPKAALGALSNITADDLRFAVLADDVAAIKALPGIGPKTAQKIIIELKDKLKLDEVFESALSKNKKADNNSNVSNVMMIRNDAVEALVSLGYSSKDALVAVKEVEDIENKDSETVLKEALKKLVKF</sequence>
<keyword id="KW-0963">Cytoplasm</keyword>
<keyword id="KW-0227">DNA damage</keyword>
<keyword id="KW-0233">DNA recombination</keyword>
<keyword id="KW-0234">DNA repair</keyword>
<keyword id="KW-0238">DNA-binding</keyword>
<keyword id="KW-1185">Reference proteome</keyword>
<organism>
    <name type="scientific">Lachnospira eligens (strain ATCC 27750 / DSM 3376 / VPI C15-48 / C15-B4)</name>
    <name type="common">Eubacterium eligens</name>
    <dbReference type="NCBI Taxonomy" id="515620"/>
    <lineage>
        <taxon>Bacteria</taxon>
        <taxon>Bacillati</taxon>
        <taxon>Bacillota</taxon>
        <taxon>Clostridia</taxon>
        <taxon>Lachnospirales</taxon>
        <taxon>Lachnospiraceae</taxon>
        <taxon>Lachnospira</taxon>
    </lineage>
</organism>
<evidence type="ECO:0000255" key="1">
    <source>
        <dbReference type="HAMAP-Rule" id="MF_00031"/>
    </source>
</evidence>
<dbReference type="EMBL" id="CP001104">
    <property type="protein sequence ID" value="ACR71943.1"/>
    <property type="molecule type" value="Genomic_DNA"/>
</dbReference>
<dbReference type="RefSeq" id="WP_012739179.1">
    <property type="nucleotide sequence ID" value="NC_012778.1"/>
</dbReference>
<dbReference type="SMR" id="C4Z030"/>
<dbReference type="STRING" id="515620.EUBELI_00942"/>
<dbReference type="GeneID" id="41355673"/>
<dbReference type="KEGG" id="eel:EUBELI_00942"/>
<dbReference type="eggNOG" id="COG0632">
    <property type="taxonomic scope" value="Bacteria"/>
</dbReference>
<dbReference type="HOGENOM" id="CLU_087936_3_0_9"/>
<dbReference type="Proteomes" id="UP000001476">
    <property type="component" value="Chromosome"/>
</dbReference>
<dbReference type="GO" id="GO:0005737">
    <property type="term" value="C:cytoplasm"/>
    <property type="evidence" value="ECO:0007669"/>
    <property type="project" value="UniProtKB-SubCell"/>
</dbReference>
<dbReference type="GO" id="GO:0009379">
    <property type="term" value="C:Holliday junction helicase complex"/>
    <property type="evidence" value="ECO:0007669"/>
    <property type="project" value="InterPro"/>
</dbReference>
<dbReference type="GO" id="GO:0048476">
    <property type="term" value="C:Holliday junction resolvase complex"/>
    <property type="evidence" value="ECO:0007669"/>
    <property type="project" value="UniProtKB-UniRule"/>
</dbReference>
<dbReference type="GO" id="GO:0005524">
    <property type="term" value="F:ATP binding"/>
    <property type="evidence" value="ECO:0007669"/>
    <property type="project" value="InterPro"/>
</dbReference>
<dbReference type="GO" id="GO:0000400">
    <property type="term" value="F:four-way junction DNA binding"/>
    <property type="evidence" value="ECO:0007669"/>
    <property type="project" value="UniProtKB-UniRule"/>
</dbReference>
<dbReference type="GO" id="GO:0009378">
    <property type="term" value="F:four-way junction helicase activity"/>
    <property type="evidence" value="ECO:0007669"/>
    <property type="project" value="InterPro"/>
</dbReference>
<dbReference type="GO" id="GO:0006310">
    <property type="term" value="P:DNA recombination"/>
    <property type="evidence" value="ECO:0007669"/>
    <property type="project" value="UniProtKB-UniRule"/>
</dbReference>
<dbReference type="GO" id="GO:0006281">
    <property type="term" value="P:DNA repair"/>
    <property type="evidence" value="ECO:0007669"/>
    <property type="project" value="UniProtKB-UniRule"/>
</dbReference>
<dbReference type="CDD" id="cd14332">
    <property type="entry name" value="UBA_RuvA_C"/>
    <property type="match status" value="1"/>
</dbReference>
<dbReference type="Gene3D" id="1.10.150.20">
    <property type="entry name" value="5' to 3' exonuclease, C-terminal subdomain"/>
    <property type="match status" value="1"/>
</dbReference>
<dbReference type="Gene3D" id="1.10.8.10">
    <property type="entry name" value="DNA helicase RuvA subunit, C-terminal domain"/>
    <property type="match status" value="1"/>
</dbReference>
<dbReference type="Gene3D" id="2.40.50.140">
    <property type="entry name" value="Nucleic acid-binding proteins"/>
    <property type="match status" value="1"/>
</dbReference>
<dbReference type="HAMAP" id="MF_00031">
    <property type="entry name" value="DNA_HJ_migration_RuvA"/>
    <property type="match status" value="1"/>
</dbReference>
<dbReference type="InterPro" id="IPR013849">
    <property type="entry name" value="DNA_helicase_Holl-junc_RuvA_I"/>
</dbReference>
<dbReference type="InterPro" id="IPR003583">
    <property type="entry name" value="Hlx-hairpin-Hlx_DNA-bd_motif"/>
</dbReference>
<dbReference type="InterPro" id="IPR012340">
    <property type="entry name" value="NA-bd_OB-fold"/>
</dbReference>
<dbReference type="InterPro" id="IPR000085">
    <property type="entry name" value="RuvA"/>
</dbReference>
<dbReference type="InterPro" id="IPR010994">
    <property type="entry name" value="RuvA_2-like"/>
</dbReference>
<dbReference type="InterPro" id="IPR011114">
    <property type="entry name" value="RuvA_C"/>
</dbReference>
<dbReference type="InterPro" id="IPR036267">
    <property type="entry name" value="RuvA_C_sf"/>
</dbReference>
<dbReference type="NCBIfam" id="TIGR00084">
    <property type="entry name" value="ruvA"/>
    <property type="match status" value="1"/>
</dbReference>
<dbReference type="Pfam" id="PF14520">
    <property type="entry name" value="HHH_5"/>
    <property type="match status" value="1"/>
</dbReference>
<dbReference type="Pfam" id="PF07499">
    <property type="entry name" value="RuvA_C"/>
    <property type="match status" value="1"/>
</dbReference>
<dbReference type="Pfam" id="PF01330">
    <property type="entry name" value="RuvA_N"/>
    <property type="match status" value="1"/>
</dbReference>
<dbReference type="SMART" id="SM00278">
    <property type="entry name" value="HhH1"/>
    <property type="match status" value="2"/>
</dbReference>
<dbReference type="SUPFAM" id="SSF46929">
    <property type="entry name" value="DNA helicase RuvA subunit, C-terminal domain"/>
    <property type="match status" value="1"/>
</dbReference>
<dbReference type="SUPFAM" id="SSF50249">
    <property type="entry name" value="Nucleic acid-binding proteins"/>
    <property type="match status" value="1"/>
</dbReference>
<dbReference type="SUPFAM" id="SSF47781">
    <property type="entry name" value="RuvA domain 2-like"/>
    <property type="match status" value="1"/>
</dbReference>
<gene>
    <name evidence="1" type="primary">ruvA</name>
    <name type="ordered locus">EUBELI_00942</name>
</gene>
<protein>
    <recommendedName>
        <fullName evidence="1">Holliday junction branch migration complex subunit RuvA</fullName>
    </recommendedName>
</protein>
<name>RUVA_LACE2</name>